<proteinExistence type="evidence at transcript level"/>
<keyword id="KW-0067">ATP-binding</keyword>
<keyword id="KW-0175">Coiled coil</keyword>
<keyword id="KW-0418">Kinase</keyword>
<keyword id="KW-0460">Magnesium</keyword>
<keyword id="KW-0469">Meiosis</keyword>
<keyword id="KW-0479">Metal-binding</keyword>
<keyword id="KW-0547">Nucleotide-binding</keyword>
<keyword id="KW-0539">Nucleus</keyword>
<keyword id="KW-1185">Reference proteome</keyword>
<keyword id="KW-0808">Transferase</keyword>
<keyword id="KW-0829">Tyrosine-protein kinase</keyword>
<dbReference type="EC" id="2.7.10.2"/>
<dbReference type="EMBL" id="BC135215">
    <property type="protein sequence ID" value="AAI35216.1"/>
    <property type="molecule type" value="mRNA"/>
</dbReference>
<dbReference type="RefSeq" id="NP_001096499.1">
    <property type="nucleotide sequence ID" value="NM_001103029.1"/>
</dbReference>
<dbReference type="RefSeq" id="XP_012814794.1">
    <property type="nucleotide sequence ID" value="XM_012959340.2"/>
</dbReference>
<dbReference type="SMR" id="A4QNA8"/>
<dbReference type="FunCoup" id="A4QNA8">
    <property type="interactions" value="840"/>
</dbReference>
<dbReference type="STRING" id="8364.ENSXETP00000017388"/>
<dbReference type="PaxDb" id="8364-ENSXETP00000060361"/>
<dbReference type="GeneID" id="100125126"/>
<dbReference type="KEGG" id="xtr:100125126"/>
<dbReference type="AGR" id="Xenbase:XB-GENE-5560750"/>
<dbReference type="CTD" id="494551"/>
<dbReference type="Xenbase" id="XB-GENE-5560750">
    <property type="gene designation" value="wee2"/>
</dbReference>
<dbReference type="eggNOG" id="KOG0601">
    <property type="taxonomic scope" value="Eukaryota"/>
</dbReference>
<dbReference type="InParanoid" id="A4QNA8"/>
<dbReference type="OMA" id="PLKDEMT"/>
<dbReference type="OrthoDB" id="5337378at2759"/>
<dbReference type="Proteomes" id="UP000008143">
    <property type="component" value="Chromosome 3"/>
</dbReference>
<dbReference type="Bgee" id="ENSXETG00000031988">
    <property type="expression patterns" value="Expressed in 2-cell stage embryo and 9 other cell types or tissues"/>
</dbReference>
<dbReference type="GO" id="GO:0005634">
    <property type="term" value="C:nucleus"/>
    <property type="evidence" value="ECO:0007669"/>
    <property type="project" value="UniProtKB-SubCell"/>
</dbReference>
<dbReference type="GO" id="GO:0005524">
    <property type="term" value="F:ATP binding"/>
    <property type="evidence" value="ECO:0007669"/>
    <property type="project" value="UniProtKB-KW"/>
</dbReference>
<dbReference type="GO" id="GO:0000287">
    <property type="term" value="F:magnesium ion binding"/>
    <property type="evidence" value="ECO:0007669"/>
    <property type="project" value="InterPro"/>
</dbReference>
<dbReference type="GO" id="GO:0004715">
    <property type="term" value="F:non-membrane spanning protein tyrosine kinase activity"/>
    <property type="evidence" value="ECO:0007669"/>
    <property type="project" value="UniProtKB-EC"/>
</dbReference>
<dbReference type="GO" id="GO:0051321">
    <property type="term" value="P:meiotic cell cycle"/>
    <property type="evidence" value="ECO:0007669"/>
    <property type="project" value="UniProtKB-KW"/>
</dbReference>
<dbReference type="GO" id="GO:0000278">
    <property type="term" value="P:mitotic cell cycle"/>
    <property type="evidence" value="ECO:0007669"/>
    <property type="project" value="InterPro"/>
</dbReference>
<dbReference type="FunFam" id="3.30.200.20:FF:000115">
    <property type="entry name" value="Wee1-like kinase 2"/>
    <property type="match status" value="1"/>
</dbReference>
<dbReference type="FunFam" id="1.10.510.10:FF:000217">
    <property type="entry name" value="Wee1-like protein kinase"/>
    <property type="match status" value="1"/>
</dbReference>
<dbReference type="Gene3D" id="3.30.200.20">
    <property type="entry name" value="Phosphorylase Kinase, domain 1"/>
    <property type="match status" value="1"/>
</dbReference>
<dbReference type="Gene3D" id="1.10.510.10">
    <property type="entry name" value="Transferase(Phosphotransferase) domain 1"/>
    <property type="match status" value="1"/>
</dbReference>
<dbReference type="InterPro" id="IPR050339">
    <property type="entry name" value="CC_SR_Kinase"/>
</dbReference>
<dbReference type="InterPro" id="IPR011009">
    <property type="entry name" value="Kinase-like_dom_sf"/>
</dbReference>
<dbReference type="InterPro" id="IPR000719">
    <property type="entry name" value="Prot_kinase_dom"/>
</dbReference>
<dbReference type="InterPro" id="IPR017441">
    <property type="entry name" value="Protein_kinase_ATP_BS"/>
</dbReference>
<dbReference type="InterPro" id="IPR008271">
    <property type="entry name" value="Ser/Thr_kinase_AS"/>
</dbReference>
<dbReference type="InterPro" id="IPR017164">
    <property type="entry name" value="Wee1-like_protein_kinase"/>
</dbReference>
<dbReference type="PANTHER" id="PTHR11042">
    <property type="entry name" value="EUKARYOTIC TRANSLATION INITIATION FACTOR 2-ALPHA KINASE EIF2-ALPHA KINASE -RELATED"/>
    <property type="match status" value="1"/>
</dbReference>
<dbReference type="PANTHER" id="PTHR11042:SF75">
    <property type="entry name" value="WEE1-LIKE PROTEIN KINASE 2"/>
    <property type="match status" value="1"/>
</dbReference>
<dbReference type="Pfam" id="PF00069">
    <property type="entry name" value="Pkinase"/>
    <property type="match status" value="1"/>
</dbReference>
<dbReference type="PIRSF" id="PIRSF037281">
    <property type="entry name" value="Wee1-like_protein_kinase"/>
    <property type="match status" value="1"/>
</dbReference>
<dbReference type="SMART" id="SM00220">
    <property type="entry name" value="S_TKc"/>
    <property type="match status" value="1"/>
</dbReference>
<dbReference type="SUPFAM" id="SSF56112">
    <property type="entry name" value="Protein kinase-like (PK-like)"/>
    <property type="match status" value="1"/>
</dbReference>
<dbReference type="PROSITE" id="PS00107">
    <property type="entry name" value="PROTEIN_KINASE_ATP"/>
    <property type="match status" value="1"/>
</dbReference>
<dbReference type="PROSITE" id="PS50011">
    <property type="entry name" value="PROTEIN_KINASE_DOM"/>
    <property type="match status" value="1"/>
</dbReference>
<dbReference type="PROSITE" id="PS00108">
    <property type="entry name" value="PROTEIN_KINASE_ST"/>
    <property type="match status" value="1"/>
</dbReference>
<organism>
    <name type="scientific">Xenopus tropicalis</name>
    <name type="common">Western clawed frog</name>
    <name type="synonym">Silurana tropicalis</name>
    <dbReference type="NCBI Taxonomy" id="8364"/>
    <lineage>
        <taxon>Eukaryota</taxon>
        <taxon>Metazoa</taxon>
        <taxon>Chordata</taxon>
        <taxon>Craniata</taxon>
        <taxon>Vertebrata</taxon>
        <taxon>Euteleostomi</taxon>
        <taxon>Amphibia</taxon>
        <taxon>Batrachia</taxon>
        <taxon>Anura</taxon>
        <taxon>Pipoidea</taxon>
        <taxon>Pipidae</taxon>
        <taxon>Xenopodinae</taxon>
        <taxon>Xenopus</taxon>
        <taxon>Silurana</taxon>
    </lineage>
</organism>
<comment type="function">
    <text evidence="1">Oocyte-specific protein tyrosine kinase that phosphorylates and inhibits cdk1 and acts as a regulator of meiosis. Required to maintain meiotic arrest in oocytes by phosphorylating cdk1 at 'Tyr-15', leading to inhibit cdk1 activity and prevent meiotic reentry (By similarity).</text>
</comment>
<comment type="catalytic activity">
    <reaction evidence="4">
        <text>L-tyrosyl-[protein] + ATP = O-phospho-L-tyrosyl-[protein] + ADP + H(+)</text>
        <dbReference type="Rhea" id="RHEA:10596"/>
        <dbReference type="Rhea" id="RHEA-COMP:10136"/>
        <dbReference type="Rhea" id="RHEA-COMP:20101"/>
        <dbReference type="ChEBI" id="CHEBI:15378"/>
        <dbReference type="ChEBI" id="CHEBI:30616"/>
        <dbReference type="ChEBI" id="CHEBI:46858"/>
        <dbReference type="ChEBI" id="CHEBI:61978"/>
        <dbReference type="ChEBI" id="CHEBI:456216"/>
        <dbReference type="EC" id="2.7.10.2"/>
    </reaction>
</comment>
<comment type="subcellular location">
    <subcellularLocation>
        <location evidence="1">Nucleus</location>
    </subcellularLocation>
</comment>
<comment type="similarity">
    <text evidence="3">Belongs to the protein kinase superfamily. Ser/Thr protein kinase family. WEE1 subfamily.</text>
</comment>
<evidence type="ECO:0000250" key="1"/>
<evidence type="ECO:0000255" key="2"/>
<evidence type="ECO:0000255" key="3">
    <source>
        <dbReference type="PROSITE-ProRule" id="PRU00159"/>
    </source>
</evidence>
<evidence type="ECO:0000255" key="4">
    <source>
        <dbReference type="PROSITE-ProRule" id="PRU10027"/>
    </source>
</evidence>
<evidence type="ECO:0000256" key="5">
    <source>
        <dbReference type="SAM" id="MobiDB-lite"/>
    </source>
</evidence>
<feature type="chain" id="PRO_0000409531" description="Wee1-like protein kinase 2">
    <location>
        <begin position="1"/>
        <end position="562"/>
    </location>
</feature>
<feature type="domain" description="Protein kinase" evidence="3">
    <location>
        <begin position="217"/>
        <end position="491"/>
    </location>
</feature>
<feature type="region of interest" description="Disordered" evidence="5">
    <location>
        <begin position="1"/>
        <end position="86"/>
    </location>
</feature>
<feature type="region of interest" description="Disordered" evidence="5">
    <location>
        <begin position="161"/>
        <end position="181"/>
    </location>
</feature>
<feature type="coiled-coil region" evidence="2">
    <location>
        <begin position="494"/>
        <end position="520"/>
    </location>
</feature>
<feature type="compositionally biased region" description="Polar residues" evidence="5">
    <location>
        <begin position="35"/>
        <end position="48"/>
    </location>
</feature>
<feature type="active site" description="Proton acceptor" evidence="3 4">
    <location>
        <position position="344"/>
    </location>
</feature>
<feature type="binding site" evidence="3">
    <location>
        <begin position="223"/>
        <end position="231"/>
    </location>
    <ligand>
        <name>ATP</name>
        <dbReference type="ChEBI" id="CHEBI:30616"/>
    </ligand>
</feature>
<feature type="binding site" evidence="3">
    <location>
        <position position="246"/>
    </location>
    <ligand>
        <name>ATP</name>
        <dbReference type="ChEBI" id="CHEBI:30616"/>
    </ligand>
</feature>
<feature type="binding site" evidence="1">
    <location>
        <position position="349"/>
    </location>
    <ligand>
        <name>Mg(2+)</name>
        <dbReference type="ChEBI" id="CHEBI:18420"/>
    </ligand>
</feature>
<feature type="binding site" evidence="1">
    <location>
        <position position="381"/>
    </location>
    <ligand>
        <name>Mg(2+)</name>
        <dbReference type="ChEBI" id="CHEBI:18420"/>
    </ligand>
</feature>
<gene>
    <name type="primary">wee2</name>
</gene>
<accession>A4QNA8</accession>
<sequence>MRTAMSCGGGLAQRLDFSSSDEEDGMSPGLEEGSHSNQRGSPVNSWRANNCPFPITPQRNERGLSPSQEELSPCSDYSPVPSDKGVGGECPGTPLHYSTWKKLKLCDTPYTPKSLLYKTLPSPGSRVQCRGQRLLRFVAGTGAELDDPALVNVNPFTPESYRQANFHPNGKRKERPEDDCSAEPQMKYAEKEHPAVFQSKRFVLRETNMVSRYKTEFLEIEKIGAGEFGSVFKCVKRLDGCFYAIKRSKKPLAGSTDEQLALREVYAHAVLGHHPHVVRYYSAWAEDDHMIIQNEYCNGGSLQDLIMENKKEGRFVPEQELKEILLQVSMGLKYIHSSGLVHMDIKPSNIFICRKQTEVGQDESDGEDDLSSASVLYKIGDLGHVTSILNPQVEEGDSRFLANEILQEDYRQLPKADIFALGLTITLAAGAGPLPCNEDSWHHIRKGNLPHIPQPLTPAFLALLKLLVHPDPVMRPPAVSLAKNSLLRRCVGKAAQLQKQLNVEKFKTAMLERELKAAKLAHGSGKDECSDLPPMSDFSCRGRKRLVGAKNARSLSFTCGGY</sequence>
<reference key="1">
    <citation type="submission" date="2007-03" db="EMBL/GenBank/DDBJ databases">
        <authorList>
            <consortium name="NIH - Xenopus Gene Collection (XGC) project"/>
        </authorList>
    </citation>
    <scope>NUCLEOTIDE SEQUENCE [LARGE SCALE MRNA]</scope>
    <source>
        <tissue>Embryo</tissue>
    </source>
</reference>
<protein>
    <recommendedName>
        <fullName>Wee1-like protein kinase 2</fullName>
        <ecNumber>2.7.10.2</ecNumber>
    </recommendedName>
</protein>
<name>WEE2_XENTR</name>